<sequence>MNSVSTQLILVLASLLLILPVVEAVEAGDAIALLLGVVLSITGICACLGIYARKRNGQM</sequence>
<feature type="signal peptide" evidence="2">
    <location>
        <begin position="1"/>
        <end position="24"/>
    </location>
</feature>
<feature type="chain" id="PRO_5015091001" description="Small integral membrane protein 30" evidence="2">
    <location>
        <begin position="25"/>
        <end position="59"/>
    </location>
</feature>
<feature type="topological domain" description="Extracellular" evidence="5">
    <location>
        <begin position="25"/>
        <end position="29"/>
    </location>
</feature>
<feature type="transmembrane region" description="Helical" evidence="2">
    <location>
        <begin position="30"/>
        <end position="50"/>
    </location>
</feature>
<feature type="topological domain" description="Cytoplasmic" evidence="5">
    <location>
        <begin position="51"/>
        <end position="59"/>
    </location>
</feature>
<protein>
    <recommendedName>
        <fullName evidence="7">Small integral membrane protein 30</fullName>
    </recommendedName>
    <alternativeName>
        <fullName evidence="4">Microprotein in antiviral immunity 1</fullName>
    </alternativeName>
</protein>
<proteinExistence type="inferred from homology"/>
<gene>
    <name evidence="7" type="primary">Smim30</name>
    <name evidence="4" type="synonym">Mavi1</name>
</gene>
<comment type="function">
    <text evidence="1 3">Negatively regulates antiviral innate immune responses (PubMed:37656786). Disrupts the interaction of antiviral protein MAVS with innate immune receptor RIGI and inhibits MAVS aggregation, resulting in the repression of type I interferon signaling and innate immune responses (By similarity).</text>
</comment>
<comment type="subunit">
    <text evidence="1">Interacts (via transmembrane domain) with antiviral protein MAVS (via transmembrane domain); the interaction disrupts MAVS interaction with RIGI and inhibits MAVS aggregation, resulting in the repression of type I interferon signaling and innate immune responses.</text>
</comment>
<comment type="subcellular location">
    <subcellularLocation>
        <location evidence="1">Endoplasmic reticulum membrane</location>
        <topology evidence="1">Single-pass type I membrane protein</topology>
    </subcellularLocation>
    <subcellularLocation>
        <location evidence="1">Mitochondrion membrane</location>
        <topology evidence="1">Single-pass type I membrane protein</topology>
    </subcellularLocation>
</comment>
<comment type="disruption phenotype">
    <text evidence="3">Following challenge with vesicular stomatitis virus (VSV), there is increased production of cytokines including Ifnb1 and Il6, reduced viral burden and higher survival rates than in wild-type mice.</text>
</comment>
<comment type="sequence caution" evidence="5">
    <conflict type="frameshift">
        <sequence resource="EMBL-CDS" id="BAC25005"/>
    </conflict>
</comment>
<organism evidence="8">
    <name type="scientific">Mus musculus</name>
    <name type="common">Mouse</name>
    <dbReference type="NCBI Taxonomy" id="10090"/>
    <lineage>
        <taxon>Eukaryota</taxon>
        <taxon>Metazoa</taxon>
        <taxon>Chordata</taxon>
        <taxon>Craniata</taxon>
        <taxon>Vertebrata</taxon>
        <taxon>Euteleostomi</taxon>
        <taxon>Mammalia</taxon>
        <taxon>Eutheria</taxon>
        <taxon>Euarchontoglires</taxon>
        <taxon>Glires</taxon>
        <taxon>Rodentia</taxon>
        <taxon>Myomorpha</taxon>
        <taxon>Muroidea</taxon>
        <taxon>Muridae</taxon>
        <taxon>Murinae</taxon>
        <taxon>Mus</taxon>
        <taxon>Mus</taxon>
    </lineage>
</organism>
<evidence type="ECO:0000250" key="1">
    <source>
        <dbReference type="UniProtKB" id="A4D0T7"/>
    </source>
</evidence>
<evidence type="ECO:0000255" key="2"/>
<evidence type="ECO:0000269" key="3">
    <source>
    </source>
</evidence>
<evidence type="ECO:0000303" key="4">
    <source>
    </source>
</evidence>
<evidence type="ECO:0000305" key="5"/>
<evidence type="ECO:0000312" key="6">
    <source>
        <dbReference type="EMBL" id="BAC25005.1"/>
    </source>
</evidence>
<evidence type="ECO:0000312" key="7">
    <source>
        <dbReference type="MGI" id="MGI:1913770"/>
    </source>
</evidence>
<evidence type="ECO:0000312" key="8">
    <source>
        <dbReference type="Proteomes" id="UP000000589"/>
    </source>
</evidence>
<name>SIM30_MOUSE</name>
<dbReference type="EMBL" id="AK002763">
    <property type="protein sequence ID" value="BAC25005.1"/>
    <property type="status" value="ALT_FRAME"/>
    <property type="molecule type" value="mRNA"/>
</dbReference>
<dbReference type="CCDS" id="CCDS90029.1"/>
<dbReference type="RefSeq" id="NP_001339816.1">
    <property type="nucleotide sequence ID" value="NM_001352887.1"/>
</dbReference>
<dbReference type="SMR" id="F2Z3Y9"/>
<dbReference type="STRING" id="10090.ENSMUSP00000116702"/>
<dbReference type="PaxDb" id="10090-ENSMUSP00000116702"/>
<dbReference type="Ensembl" id="ENSMUST00000139231.2">
    <property type="protein sequence ID" value="ENSMUSP00000116702.2"/>
    <property type="gene ID" value="ENSMUSG00000052419.8"/>
</dbReference>
<dbReference type="Ensembl" id="ENSMUST00000155856.2">
    <property type="protein sequence ID" value="ENSMUSP00000120110.2"/>
    <property type="gene ID" value="ENSMUSG00000052419.8"/>
</dbReference>
<dbReference type="Ensembl" id="ENSMUST00000185219.2">
    <property type="protein sequence ID" value="ENSMUSP00000140155.2"/>
    <property type="gene ID" value="ENSMUSG00000052419.8"/>
</dbReference>
<dbReference type="Ensembl" id="ENSMUST00000185361.2">
    <property type="protein sequence ID" value="ENSMUSP00000139650.2"/>
    <property type="gene ID" value="ENSMUSG00000052419.8"/>
</dbReference>
<dbReference type="GeneID" id="66520"/>
<dbReference type="AGR" id="MGI:1913770"/>
<dbReference type="MGI" id="MGI:1913770">
    <property type="gene designation" value="Smim30"/>
</dbReference>
<dbReference type="VEuPathDB" id="HostDB:ENSMUSG00000052419"/>
<dbReference type="eggNOG" id="ENOG502TGXW">
    <property type="taxonomic scope" value="Eukaryota"/>
</dbReference>
<dbReference type="GeneTree" id="ENSGT00400000023684"/>
<dbReference type="HOGENOM" id="CLU_2960006_0_0_1"/>
<dbReference type="OMA" id="FCACLGY"/>
<dbReference type="OrthoDB" id="8646386at2759"/>
<dbReference type="ChiTaRS" id="2610001J05Rik">
    <property type="organism name" value="mouse"/>
</dbReference>
<dbReference type="PRO" id="PR:F2Z3Y9"/>
<dbReference type="Proteomes" id="UP000000589">
    <property type="component" value="Chromosome 6"/>
</dbReference>
<dbReference type="RNAct" id="F2Z3Y9">
    <property type="molecule type" value="protein"/>
</dbReference>
<dbReference type="Bgee" id="ENSMUSG00000052419">
    <property type="expression patterns" value="Expressed in aortic valve and 254 other cell types or tissues"/>
</dbReference>
<dbReference type="GO" id="GO:0005789">
    <property type="term" value="C:endoplasmic reticulum membrane"/>
    <property type="evidence" value="ECO:0000250"/>
    <property type="project" value="UniProtKB"/>
</dbReference>
<dbReference type="GO" id="GO:0031966">
    <property type="term" value="C:mitochondrial membrane"/>
    <property type="evidence" value="ECO:0000250"/>
    <property type="project" value="UniProtKB"/>
</dbReference>
<dbReference type="GO" id="GO:0045087">
    <property type="term" value="P:innate immune response"/>
    <property type="evidence" value="ECO:0007669"/>
    <property type="project" value="UniProtKB-KW"/>
</dbReference>
<dbReference type="GO" id="GO:0060339">
    <property type="term" value="P:negative regulation of type I interferon-mediated signaling pathway"/>
    <property type="evidence" value="ECO:0007669"/>
    <property type="project" value="Ensembl"/>
</dbReference>
<dbReference type="InterPro" id="IPR031742">
    <property type="entry name" value="DUF4730"/>
</dbReference>
<dbReference type="PANTHER" id="PTHR36878">
    <property type="entry name" value="SMALL INTEGRAL MEMBRANE PROTEIN 30"/>
    <property type="match status" value="1"/>
</dbReference>
<dbReference type="PANTHER" id="PTHR36878:SF1">
    <property type="entry name" value="SMALL INTEGRAL MEMBRANE PROTEIN 30"/>
    <property type="match status" value="1"/>
</dbReference>
<dbReference type="Pfam" id="PF15873">
    <property type="entry name" value="DUF4730"/>
    <property type="match status" value="1"/>
</dbReference>
<keyword id="KW-0256">Endoplasmic reticulum</keyword>
<keyword id="KW-0391">Immunity</keyword>
<keyword id="KW-0399">Innate immunity</keyword>
<keyword id="KW-0472">Membrane</keyword>
<keyword id="KW-0496">Mitochondrion</keyword>
<keyword id="KW-1185">Reference proteome</keyword>
<keyword id="KW-0732">Signal</keyword>
<keyword id="KW-0812">Transmembrane</keyword>
<keyword id="KW-1133">Transmembrane helix</keyword>
<reference evidence="6" key="1">
    <citation type="journal article" date="2005" name="Science">
        <title>The transcriptional landscape of the mammalian genome.</title>
        <authorList>
            <person name="Carninci P."/>
            <person name="Kasukawa T."/>
            <person name="Katayama S."/>
            <person name="Gough J."/>
            <person name="Frith M.C."/>
            <person name="Maeda N."/>
            <person name="Oyama R."/>
            <person name="Ravasi T."/>
            <person name="Lenhard B."/>
            <person name="Wells C."/>
            <person name="Kodzius R."/>
            <person name="Shimokawa K."/>
            <person name="Bajic V.B."/>
            <person name="Brenner S.E."/>
            <person name="Batalov S."/>
            <person name="Forrest A.R."/>
            <person name="Zavolan M."/>
            <person name="Davis M.J."/>
            <person name="Wilming L.G."/>
            <person name="Aidinis V."/>
            <person name="Allen J.E."/>
            <person name="Ambesi-Impiombato A."/>
            <person name="Apweiler R."/>
            <person name="Aturaliya R.N."/>
            <person name="Bailey T.L."/>
            <person name="Bansal M."/>
            <person name="Baxter L."/>
            <person name="Beisel K.W."/>
            <person name="Bersano T."/>
            <person name="Bono H."/>
            <person name="Chalk A.M."/>
            <person name="Chiu K.P."/>
            <person name="Choudhary V."/>
            <person name="Christoffels A."/>
            <person name="Clutterbuck D.R."/>
            <person name="Crowe M.L."/>
            <person name="Dalla E."/>
            <person name="Dalrymple B.P."/>
            <person name="de Bono B."/>
            <person name="Della Gatta G."/>
            <person name="di Bernardo D."/>
            <person name="Down T."/>
            <person name="Engstrom P."/>
            <person name="Fagiolini M."/>
            <person name="Faulkner G."/>
            <person name="Fletcher C.F."/>
            <person name="Fukushima T."/>
            <person name="Furuno M."/>
            <person name="Futaki S."/>
            <person name="Gariboldi M."/>
            <person name="Georgii-Hemming P."/>
            <person name="Gingeras T.R."/>
            <person name="Gojobori T."/>
            <person name="Green R.E."/>
            <person name="Gustincich S."/>
            <person name="Harbers M."/>
            <person name="Hayashi Y."/>
            <person name="Hensch T.K."/>
            <person name="Hirokawa N."/>
            <person name="Hill D."/>
            <person name="Huminiecki L."/>
            <person name="Iacono M."/>
            <person name="Ikeo K."/>
            <person name="Iwama A."/>
            <person name="Ishikawa T."/>
            <person name="Jakt M."/>
            <person name="Kanapin A."/>
            <person name="Katoh M."/>
            <person name="Kawasawa Y."/>
            <person name="Kelso J."/>
            <person name="Kitamura H."/>
            <person name="Kitano H."/>
            <person name="Kollias G."/>
            <person name="Krishnan S.P."/>
            <person name="Kruger A."/>
            <person name="Kummerfeld S.K."/>
            <person name="Kurochkin I.V."/>
            <person name="Lareau L.F."/>
            <person name="Lazarevic D."/>
            <person name="Lipovich L."/>
            <person name="Liu J."/>
            <person name="Liuni S."/>
            <person name="McWilliam S."/>
            <person name="Madan Babu M."/>
            <person name="Madera M."/>
            <person name="Marchionni L."/>
            <person name="Matsuda H."/>
            <person name="Matsuzawa S."/>
            <person name="Miki H."/>
            <person name="Mignone F."/>
            <person name="Miyake S."/>
            <person name="Morris K."/>
            <person name="Mottagui-Tabar S."/>
            <person name="Mulder N."/>
            <person name="Nakano N."/>
            <person name="Nakauchi H."/>
            <person name="Ng P."/>
            <person name="Nilsson R."/>
            <person name="Nishiguchi S."/>
            <person name="Nishikawa S."/>
            <person name="Nori F."/>
            <person name="Ohara O."/>
            <person name="Okazaki Y."/>
            <person name="Orlando V."/>
            <person name="Pang K.C."/>
            <person name="Pavan W.J."/>
            <person name="Pavesi G."/>
            <person name="Pesole G."/>
            <person name="Petrovsky N."/>
            <person name="Piazza S."/>
            <person name="Reed J."/>
            <person name="Reid J.F."/>
            <person name="Ring B.Z."/>
            <person name="Ringwald M."/>
            <person name="Rost B."/>
            <person name="Ruan Y."/>
            <person name="Salzberg S.L."/>
            <person name="Sandelin A."/>
            <person name="Schneider C."/>
            <person name="Schoenbach C."/>
            <person name="Sekiguchi K."/>
            <person name="Semple C.A."/>
            <person name="Seno S."/>
            <person name="Sessa L."/>
            <person name="Sheng Y."/>
            <person name="Shibata Y."/>
            <person name="Shimada H."/>
            <person name="Shimada K."/>
            <person name="Silva D."/>
            <person name="Sinclair B."/>
            <person name="Sperling S."/>
            <person name="Stupka E."/>
            <person name="Sugiura K."/>
            <person name="Sultana R."/>
            <person name="Takenaka Y."/>
            <person name="Taki K."/>
            <person name="Tammoja K."/>
            <person name="Tan S.L."/>
            <person name="Tang S."/>
            <person name="Taylor M.S."/>
            <person name="Tegner J."/>
            <person name="Teichmann S.A."/>
            <person name="Ueda H.R."/>
            <person name="van Nimwegen E."/>
            <person name="Verardo R."/>
            <person name="Wei C.L."/>
            <person name="Yagi K."/>
            <person name="Yamanishi H."/>
            <person name="Zabarovsky E."/>
            <person name="Zhu S."/>
            <person name="Zimmer A."/>
            <person name="Hide W."/>
            <person name="Bult C."/>
            <person name="Grimmond S.M."/>
            <person name="Teasdale R.D."/>
            <person name="Liu E.T."/>
            <person name="Brusic V."/>
            <person name="Quackenbush J."/>
            <person name="Wahlestedt C."/>
            <person name="Mattick J.S."/>
            <person name="Hume D.A."/>
            <person name="Kai C."/>
            <person name="Sasaki D."/>
            <person name="Tomaru Y."/>
            <person name="Fukuda S."/>
            <person name="Kanamori-Katayama M."/>
            <person name="Suzuki M."/>
            <person name="Aoki J."/>
            <person name="Arakawa T."/>
            <person name="Iida J."/>
            <person name="Imamura K."/>
            <person name="Itoh M."/>
            <person name="Kato T."/>
            <person name="Kawaji H."/>
            <person name="Kawagashira N."/>
            <person name="Kawashima T."/>
            <person name="Kojima M."/>
            <person name="Kondo S."/>
            <person name="Konno H."/>
            <person name="Nakano K."/>
            <person name="Ninomiya N."/>
            <person name="Nishio T."/>
            <person name="Okada M."/>
            <person name="Plessy C."/>
            <person name="Shibata K."/>
            <person name="Shiraki T."/>
            <person name="Suzuki S."/>
            <person name="Tagami M."/>
            <person name="Waki K."/>
            <person name="Watahiki A."/>
            <person name="Okamura-Oho Y."/>
            <person name="Suzuki H."/>
            <person name="Kawai J."/>
            <person name="Hayashizaki Y."/>
        </authorList>
    </citation>
    <scope>NUCLEOTIDE SEQUENCE [LARGE SCALE MRNA]</scope>
    <source>
        <strain evidence="6">C57BL/6J</strain>
        <tissue evidence="6">Kidney</tissue>
    </source>
</reference>
<reference evidence="8" key="2">
    <citation type="journal article" date="2009" name="PLoS Biol.">
        <title>Lineage-specific biology revealed by a finished genome assembly of the mouse.</title>
        <authorList>
            <person name="Church D.M."/>
            <person name="Goodstadt L."/>
            <person name="Hillier L.W."/>
            <person name="Zody M.C."/>
            <person name="Goldstein S."/>
            <person name="She X."/>
            <person name="Bult C.J."/>
            <person name="Agarwala R."/>
            <person name="Cherry J.L."/>
            <person name="DiCuccio M."/>
            <person name="Hlavina W."/>
            <person name="Kapustin Y."/>
            <person name="Meric P."/>
            <person name="Maglott D."/>
            <person name="Birtle Z."/>
            <person name="Marques A.C."/>
            <person name="Graves T."/>
            <person name="Zhou S."/>
            <person name="Teague B."/>
            <person name="Potamousis K."/>
            <person name="Churas C."/>
            <person name="Place M."/>
            <person name="Herschleb J."/>
            <person name="Runnheim R."/>
            <person name="Forrest D."/>
            <person name="Amos-Landgraf J."/>
            <person name="Schwartz D.C."/>
            <person name="Cheng Z."/>
            <person name="Lindblad-Toh K."/>
            <person name="Eichler E.E."/>
            <person name="Ponting C.P."/>
        </authorList>
    </citation>
    <scope>NUCLEOTIDE SEQUENCE [LARGE SCALE GENOMIC DNA]</scope>
    <source>
        <strain evidence="8">C57BL/6J</strain>
    </source>
</reference>
<reference evidence="5" key="3">
    <citation type="journal article" date="2023" name="Sci. Adv.">
        <title>MAVI1, an endoplasmic reticulum-localized microprotein, suppresses antiviral innate immune response by targeting MAVS on mitochondrion.</title>
        <authorList>
            <person name="Shi T.T."/>
            <person name="Huang Y."/>
            <person name="Li Y."/>
            <person name="Dai X.L."/>
            <person name="He Y.H."/>
            <person name="Ding J.C."/>
            <person name="Ran T."/>
            <person name="Shi Y."/>
            <person name="Yuan Q."/>
            <person name="Li W.J."/>
            <person name="Liu W."/>
        </authorList>
    </citation>
    <scope>FUNCTION</scope>
    <scope>DISRUPTION PHENOTYPE</scope>
</reference>
<accession>F2Z3Y9</accession>
<accession>Q8CF75</accession>